<evidence type="ECO:0000255" key="1">
    <source>
        <dbReference type="HAMAP-Rule" id="MF_00120"/>
    </source>
</evidence>
<evidence type="ECO:0000256" key="2">
    <source>
        <dbReference type="SAM" id="MobiDB-lite"/>
    </source>
</evidence>
<reference key="1">
    <citation type="journal article" date="2003" name="Proc. Natl. Acad. Sci. U.S.A.">
        <title>Complete genome sequence and analysis of Wolinella succinogenes.</title>
        <authorList>
            <person name="Baar C."/>
            <person name="Eppinger M."/>
            <person name="Raddatz G."/>
            <person name="Simon J."/>
            <person name="Lanz C."/>
            <person name="Klimmek O."/>
            <person name="Nandakumar R."/>
            <person name="Gross R."/>
            <person name="Rosinus A."/>
            <person name="Keller H."/>
            <person name="Jagtap P."/>
            <person name="Linke B."/>
            <person name="Meyer F."/>
            <person name="Lederer H."/>
            <person name="Schuster S.C."/>
        </authorList>
    </citation>
    <scope>NUCLEOTIDE SEQUENCE [LARGE SCALE GENOMIC DNA]</scope>
    <source>
        <strain>ATCC 29543 / DSM 1740 / CCUG 13145 / JCM 31913 / LMG 7466 / NCTC 11488 / FDC 602W</strain>
    </source>
</reference>
<name>GATA_WOLSU</name>
<sequence>MITLKQAMELAPQALSEIKTEIRKKVSESSLNAYVGEIRDSLEGGIPILVKDNINVKGSELTCGSKILEGYVAPYNATVIEKLHAQGMSAFGRSNMDEFAMGSTTESSAHGKTLNPVDSSRVPGGSSGGSASAVAGGLAIAALGSDTGGSIRQPAAFCGCVGLKPTYGRVSRYGLVAYASSLDQIGPITQNVEDAAILFDAISGHDGRDSTSASLAPTQTHKALDANKKQTIAILPDLLKEASKPIQEAYFETVKILESEGHKIVEKSMLNTAYHISAYYVLCTAEASSNLARFDGVRYGRRAEAQNLKELYIKSRTEGFGEEVKRRILLGSFVLSSGYYDAYYLKAQKVRHLIKNQYDEIFKDCDLVLSPVAPTVAPKFGSTSTPLEMYLGDIYTISINLAGLPALSLPVGKSEEGLPVGMQLIGKAFGEQSVLDGALSLERAIGFAL</sequence>
<keyword id="KW-0067">ATP-binding</keyword>
<keyword id="KW-0436">Ligase</keyword>
<keyword id="KW-0547">Nucleotide-binding</keyword>
<keyword id="KW-0648">Protein biosynthesis</keyword>
<keyword id="KW-1185">Reference proteome</keyword>
<feature type="chain" id="PRO_0000105227" description="Glutamyl-tRNA(Gln) amidotransferase subunit A">
    <location>
        <begin position="1"/>
        <end position="449"/>
    </location>
</feature>
<feature type="region of interest" description="Disordered" evidence="2">
    <location>
        <begin position="103"/>
        <end position="128"/>
    </location>
</feature>
<feature type="compositionally biased region" description="Low complexity" evidence="2">
    <location>
        <begin position="119"/>
        <end position="128"/>
    </location>
</feature>
<feature type="active site" description="Charge relay system" evidence="1">
    <location>
        <position position="51"/>
    </location>
</feature>
<feature type="active site" description="Charge relay system" evidence="1">
    <location>
        <position position="126"/>
    </location>
</feature>
<feature type="active site" description="Acyl-ester intermediate" evidence="1">
    <location>
        <position position="150"/>
    </location>
</feature>
<organism>
    <name type="scientific">Wolinella succinogenes (strain ATCC 29543 / DSM 1740 / CCUG 13145 / JCM 31913 / LMG 7466 / NCTC 11488 / FDC 602W)</name>
    <name type="common">Vibrio succinogenes</name>
    <dbReference type="NCBI Taxonomy" id="273121"/>
    <lineage>
        <taxon>Bacteria</taxon>
        <taxon>Pseudomonadati</taxon>
        <taxon>Campylobacterota</taxon>
        <taxon>Epsilonproteobacteria</taxon>
        <taxon>Campylobacterales</taxon>
        <taxon>Helicobacteraceae</taxon>
        <taxon>Wolinella</taxon>
    </lineage>
</organism>
<gene>
    <name evidence="1" type="primary">gatA</name>
    <name type="ordered locus">WS1896</name>
</gene>
<protein>
    <recommendedName>
        <fullName evidence="1">Glutamyl-tRNA(Gln) amidotransferase subunit A</fullName>
        <shortName evidence="1">Glu-ADT subunit A</shortName>
        <ecNumber evidence="1">6.3.5.7</ecNumber>
    </recommendedName>
</protein>
<accession>Q7M842</accession>
<proteinExistence type="inferred from homology"/>
<comment type="function">
    <text evidence="1">Allows the formation of correctly charged Gln-tRNA(Gln) through the transamidation of misacylated Glu-tRNA(Gln) in organisms which lack glutaminyl-tRNA synthetase. The reaction takes place in the presence of glutamine and ATP through an activated gamma-phospho-Glu-tRNA(Gln).</text>
</comment>
<comment type="catalytic activity">
    <reaction evidence="1">
        <text>L-glutamyl-tRNA(Gln) + L-glutamine + ATP + H2O = L-glutaminyl-tRNA(Gln) + L-glutamate + ADP + phosphate + H(+)</text>
        <dbReference type="Rhea" id="RHEA:17521"/>
        <dbReference type="Rhea" id="RHEA-COMP:9681"/>
        <dbReference type="Rhea" id="RHEA-COMP:9684"/>
        <dbReference type="ChEBI" id="CHEBI:15377"/>
        <dbReference type="ChEBI" id="CHEBI:15378"/>
        <dbReference type="ChEBI" id="CHEBI:29985"/>
        <dbReference type="ChEBI" id="CHEBI:30616"/>
        <dbReference type="ChEBI" id="CHEBI:43474"/>
        <dbReference type="ChEBI" id="CHEBI:58359"/>
        <dbReference type="ChEBI" id="CHEBI:78520"/>
        <dbReference type="ChEBI" id="CHEBI:78521"/>
        <dbReference type="ChEBI" id="CHEBI:456216"/>
        <dbReference type="EC" id="6.3.5.7"/>
    </reaction>
</comment>
<comment type="subunit">
    <text evidence="1">Heterotrimer of A, B and C subunits.</text>
</comment>
<comment type="similarity">
    <text evidence="1">Belongs to the amidase family. GatA subfamily.</text>
</comment>
<dbReference type="EC" id="6.3.5.7" evidence="1"/>
<dbReference type="EMBL" id="BX571662">
    <property type="protein sequence ID" value="CAE10906.1"/>
    <property type="molecule type" value="Genomic_DNA"/>
</dbReference>
<dbReference type="RefSeq" id="WP_011139689.1">
    <property type="nucleotide sequence ID" value="NC_005090.1"/>
</dbReference>
<dbReference type="SMR" id="Q7M842"/>
<dbReference type="STRING" id="273121.WS1896"/>
<dbReference type="KEGG" id="wsu:WS1896"/>
<dbReference type="eggNOG" id="COG0154">
    <property type="taxonomic scope" value="Bacteria"/>
</dbReference>
<dbReference type="HOGENOM" id="CLU_009600_0_3_7"/>
<dbReference type="Proteomes" id="UP000000422">
    <property type="component" value="Chromosome"/>
</dbReference>
<dbReference type="GO" id="GO:0030956">
    <property type="term" value="C:glutamyl-tRNA(Gln) amidotransferase complex"/>
    <property type="evidence" value="ECO:0007669"/>
    <property type="project" value="InterPro"/>
</dbReference>
<dbReference type="GO" id="GO:0005524">
    <property type="term" value="F:ATP binding"/>
    <property type="evidence" value="ECO:0007669"/>
    <property type="project" value="UniProtKB-KW"/>
</dbReference>
<dbReference type="GO" id="GO:0050567">
    <property type="term" value="F:glutaminyl-tRNA synthase (glutamine-hydrolyzing) activity"/>
    <property type="evidence" value="ECO:0007669"/>
    <property type="project" value="UniProtKB-UniRule"/>
</dbReference>
<dbReference type="GO" id="GO:0006412">
    <property type="term" value="P:translation"/>
    <property type="evidence" value="ECO:0007669"/>
    <property type="project" value="UniProtKB-UniRule"/>
</dbReference>
<dbReference type="Gene3D" id="3.90.1300.10">
    <property type="entry name" value="Amidase signature (AS) domain"/>
    <property type="match status" value="1"/>
</dbReference>
<dbReference type="HAMAP" id="MF_00120">
    <property type="entry name" value="GatA"/>
    <property type="match status" value="1"/>
</dbReference>
<dbReference type="InterPro" id="IPR000120">
    <property type="entry name" value="Amidase"/>
</dbReference>
<dbReference type="InterPro" id="IPR020556">
    <property type="entry name" value="Amidase_CS"/>
</dbReference>
<dbReference type="InterPro" id="IPR023631">
    <property type="entry name" value="Amidase_dom"/>
</dbReference>
<dbReference type="InterPro" id="IPR036928">
    <property type="entry name" value="AS_sf"/>
</dbReference>
<dbReference type="InterPro" id="IPR004412">
    <property type="entry name" value="GatA"/>
</dbReference>
<dbReference type="NCBIfam" id="TIGR00132">
    <property type="entry name" value="gatA"/>
    <property type="match status" value="1"/>
</dbReference>
<dbReference type="PANTHER" id="PTHR11895:SF151">
    <property type="entry name" value="GLUTAMYL-TRNA(GLN) AMIDOTRANSFERASE SUBUNIT A"/>
    <property type="match status" value="1"/>
</dbReference>
<dbReference type="PANTHER" id="PTHR11895">
    <property type="entry name" value="TRANSAMIDASE"/>
    <property type="match status" value="1"/>
</dbReference>
<dbReference type="Pfam" id="PF01425">
    <property type="entry name" value="Amidase"/>
    <property type="match status" value="1"/>
</dbReference>
<dbReference type="SUPFAM" id="SSF75304">
    <property type="entry name" value="Amidase signature (AS) enzymes"/>
    <property type="match status" value="1"/>
</dbReference>
<dbReference type="PROSITE" id="PS00571">
    <property type="entry name" value="AMIDASES"/>
    <property type="match status" value="1"/>
</dbReference>